<reference key="1">
    <citation type="journal article" date="2004" name="Proc. Natl. Acad. Sci. U.S.A.">
        <title>Complete genomes of two clinical Staphylococcus aureus strains: evidence for the rapid evolution of virulence and drug resistance.</title>
        <authorList>
            <person name="Holden M.T.G."/>
            <person name="Feil E.J."/>
            <person name="Lindsay J.A."/>
            <person name="Peacock S.J."/>
            <person name="Day N.P.J."/>
            <person name="Enright M.C."/>
            <person name="Foster T.J."/>
            <person name="Moore C.E."/>
            <person name="Hurst L."/>
            <person name="Atkin R."/>
            <person name="Barron A."/>
            <person name="Bason N."/>
            <person name="Bentley S.D."/>
            <person name="Chillingworth C."/>
            <person name="Chillingworth T."/>
            <person name="Churcher C."/>
            <person name="Clark L."/>
            <person name="Corton C."/>
            <person name="Cronin A."/>
            <person name="Doggett J."/>
            <person name="Dowd L."/>
            <person name="Feltwell T."/>
            <person name="Hance Z."/>
            <person name="Harris B."/>
            <person name="Hauser H."/>
            <person name="Holroyd S."/>
            <person name="Jagels K."/>
            <person name="James K.D."/>
            <person name="Lennard N."/>
            <person name="Line A."/>
            <person name="Mayes R."/>
            <person name="Moule S."/>
            <person name="Mungall K."/>
            <person name="Ormond D."/>
            <person name="Quail M.A."/>
            <person name="Rabbinowitsch E."/>
            <person name="Rutherford K.M."/>
            <person name="Sanders M."/>
            <person name="Sharp S."/>
            <person name="Simmonds M."/>
            <person name="Stevens K."/>
            <person name="Whitehead S."/>
            <person name="Barrell B.G."/>
            <person name="Spratt B.G."/>
            <person name="Parkhill J."/>
        </authorList>
    </citation>
    <scope>NUCLEOTIDE SEQUENCE [LARGE SCALE GENOMIC DNA]</scope>
    <source>
        <strain>MSSA476</strain>
    </source>
</reference>
<feature type="chain" id="PRO_0000162350" description="UPF0060 membrane protein SAS2231">
    <location>
        <begin position="1"/>
        <end position="108"/>
    </location>
</feature>
<feature type="transmembrane region" description="Helical" evidence="1">
    <location>
        <begin position="5"/>
        <end position="25"/>
    </location>
</feature>
<feature type="transmembrane region" description="Helical" evidence="1">
    <location>
        <begin position="31"/>
        <end position="51"/>
    </location>
</feature>
<feature type="transmembrane region" description="Helical" evidence="1">
    <location>
        <begin position="60"/>
        <end position="80"/>
    </location>
</feature>
<feature type="transmembrane region" description="Helical" evidence="1">
    <location>
        <begin position="86"/>
        <end position="106"/>
    </location>
</feature>
<proteinExistence type="inferred from homology"/>
<sequence>MLYPIFIFILAGLCEIGGGYLIWLWLREGQSSLVGLIGGAILMLYGVIATFQSFPSFGRVYAAYGGVFIIMSLIFAMVVDKQMPDKYDVIGAIICIVGVLVMLLPSRA</sequence>
<keyword id="KW-1003">Cell membrane</keyword>
<keyword id="KW-0472">Membrane</keyword>
<keyword id="KW-0812">Transmembrane</keyword>
<keyword id="KW-1133">Transmembrane helix</keyword>
<accession>Q6G6Y2</accession>
<organism>
    <name type="scientific">Staphylococcus aureus (strain MSSA476)</name>
    <dbReference type="NCBI Taxonomy" id="282459"/>
    <lineage>
        <taxon>Bacteria</taxon>
        <taxon>Bacillati</taxon>
        <taxon>Bacillota</taxon>
        <taxon>Bacilli</taxon>
        <taxon>Bacillales</taxon>
        <taxon>Staphylococcaceae</taxon>
        <taxon>Staphylococcus</taxon>
    </lineage>
</organism>
<dbReference type="EMBL" id="BX571857">
    <property type="protein sequence ID" value="CAG44042.1"/>
    <property type="molecule type" value="Genomic_DNA"/>
</dbReference>
<dbReference type="RefSeq" id="WP_000966695.1">
    <property type="nucleotide sequence ID" value="NC_002953.3"/>
</dbReference>
<dbReference type="SMR" id="Q6G6Y2"/>
<dbReference type="KEGG" id="sas:SAS2231"/>
<dbReference type="HOGENOM" id="CLU_117653_0_1_9"/>
<dbReference type="GO" id="GO:0005886">
    <property type="term" value="C:plasma membrane"/>
    <property type="evidence" value="ECO:0007669"/>
    <property type="project" value="UniProtKB-SubCell"/>
</dbReference>
<dbReference type="HAMAP" id="MF_00010">
    <property type="entry name" value="UPF0060"/>
    <property type="match status" value="1"/>
</dbReference>
<dbReference type="InterPro" id="IPR003844">
    <property type="entry name" value="UPF0060"/>
</dbReference>
<dbReference type="NCBIfam" id="NF002586">
    <property type="entry name" value="PRK02237.1"/>
    <property type="match status" value="1"/>
</dbReference>
<dbReference type="PANTHER" id="PTHR36116">
    <property type="entry name" value="UPF0060 MEMBRANE PROTEIN YNFA"/>
    <property type="match status" value="1"/>
</dbReference>
<dbReference type="PANTHER" id="PTHR36116:SF1">
    <property type="entry name" value="UPF0060 MEMBRANE PROTEIN YNFA"/>
    <property type="match status" value="1"/>
</dbReference>
<dbReference type="Pfam" id="PF02694">
    <property type="entry name" value="UPF0060"/>
    <property type="match status" value="1"/>
</dbReference>
<dbReference type="SUPFAM" id="SSF103481">
    <property type="entry name" value="Multidrug resistance efflux transporter EmrE"/>
    <property type="match status" value="1"/>
</dbReference>
<gene>
    <name type="ordered locus">SAS2231</name>
</gene>
<comment type="subcellular location">
    <subcellularLocation>
        <location evidence="1">Cell membrane</location>
        <topology evidence="1">Multi-pass membrane protein</topology>
    </subcellularLocation>
</comment>
<comment type="similarity">
    <text evidence="1">Belongs to the UPF0060 family.</text>
</comment>
<protein>
    <recommendedName>
        <fullName evidence="1">UPF0060 membrane protein SAS2231</fullName>
    </recommendedName>
</protein>
<name>Y2231_STAAS</name>
<evidence type="ECO:0000255" key="1">
    <source>
        <dbReference type="HAMAP-Rule" id="MF_00010"/>
    </source>
</evidence>